<reference key="1">
    <citation type="journal article" date="2009" name="J. Bacteriol.">
        <title>The genome of Burkholderia cenocepacia J2315, an epidemic pathogen of cystic fibrosis patients.</title>
        <authorList>
            <person name="Holden M.T."/>
            <person name="Seth-Smith H.M."/>
            <person name="Crossman L.C."/>
            <person name="Sebaihia M."/>
            <person name="Bentley S.D."/>
            <person name="Cerdeno-Tarraga A.M."/>
            <person name="Thomson N.R."/>
            <person name="Bason N."/>
            <person name="Quail M.A."/>
            <person name="Sharp S."/>
            <person name="Cherevach I."/>
            <person name="Churcher C."/>
            <person name="Goodhead I."/>
            <person name="Hauser H."/>
            <person name="Holroyd N."/>
            <person name="Mungall K."/>
            <person name="Scott P."/>
            <person name="Walker D."/>
            <person name="White B."/>
            <person name="Rose H."/>
            <person name="Iversen P."/>
            <person name="Mil-Homens D."/>
            <person name="Rocha E.P."/>
            <person name="Fialho A.M."/>
            <person name="Baldwin A."/>
            <person name="Dowson C."/>
            <person name="Barrell B.G."/>
            <person name="Govan J.R."/>
            <person name="Vandamme P."/>
            <person name="Hart C.A."/>
            <person name="Mahenthiralingam E."/>
            <person name="Parkhill J."/>
        </authorList>
    </citation>
    <scope>NUCLEOTIDE SEQUENCE [LARGE SCALE GENOMIC DNA]</scope>
    <source>
        <strain>ATCC BAA-245 / DSM 16553 / LMG 16656 / NCTC 13227 / J2315 / CF5610</strain>
    </source>
</reference>
<gene>
    <name evidence="1" type="primary">rpsR</name>
    <name type="ordered locus">BceJ2315_19070</name>
    <name type="ORF">BCAL1943</name>
</gene>
<sequence>MPRPTGKKFDKRRQQQNPLFKRKKFCRFTAAGVEQIDYKDTETLKDFIGENGKITPARLTGTKAHYQRQLDTAIKRARFLALLPYTDQHKA</sequence>
<organism>
    <name type="scientific">Burkholderia cenocepacia (strain ATCC BAA-245 / DSM 16553 / LMG 16656 / NCTC 13227 / J2315 / CF5610)</name>
    <name type="common">Burkholderia cepacia (strain J2315)</name>
    <dbReference type="NCBI Taxonomy" id="216591"/>
    <lineage>
        <taxon>Bacteria</taxon>
        <taxon>Pseudomonadati</taxon>
        <taxon>Pseudomonadota</taxon>
        <taxon>Betaproteobacteria</taxon>
        <taxon>Burkholderiales</taxon>
        <taxon>Burkholderiaceae</taxon>
        <taxon>Burkholderia</taxon>
        <taxon>Burkholderia cepacia complex</taxon>
    </lineage>
</organism>
<accession>B4EBH1</accession>
<protein>
    <recommendedName>
        <fullName evidence="1">Small ribosomal subunit protein bS18</fullName>
    </recommendedName>
    <alternativeName>
        <fullName evidence="2">30S ribosomal protein S18</fullName>
    </alternativeName>
</protein>
<keyword id="KW-0687">Ribonucleoprotein</keyword>
<keyword id="KW-0689">Ribosomal protein</keyword>
<keyword id="KW-0694">RNA-binding</keyword>
<keyword id="KW-0699">rRNA-binding</keyword>
<evidence type="ECO:0000255" key="1">
    <source>
        <dbReference type="HAMAP-Rule" id="MF_00270"/>
    </source>
</evidence>
<evidence type="ECO:0000305" key="2"/>
<feature type="chain" id="PRO_1000114405" description="Small ribosomal subunit protein bS18">
    <location>
        <begin position="1"/>
        <end position="91"/>
    </location>
</feature>
<name>RS18_BURCJ</name>
<dbReference type="EMBL" id="AM747720">
    <property type="protein sequence ID" value="CAR52244.1"/>
    <property type="molecule type" value="Genomic_DNA"/>
</dbReference>
<dbReference type="RefSeq" id="WP_006486248.1">
    <property type="nucleotide sequence ID" value="NC_011000.1"/>
</dbReference>
<dbReference type="SMR" id="B4EBH1"/>
<dbReference type="GeneID" id="98105608"/>
<dbReference type="KEGG" id="bcj:BCAL1943"/>
<dbReference type="eggNOG" id="COG0238">
    <property type="taxonomic scope" value="Bacteria"/>
</dbReference>
<dbReference type="HOGENOM" id="CLU_148710_0_3_4"/>
<dbReference type="BioCyc" id="BCEN216591:G1G1V-2137-MONOMER"/>
<dbReference type="Proteomes" id="UP000001035">
    <property type="component" value="Chromosome 1"/>
</dbReference>
<dbReference type="GO" id="GO:0022627">
    <property type="term" value="C:cytosolic small ribosomal subunit"/>
    <property type="evidence" value="ECO:0007669"/>
    <property type="project" value="TreeGrafter"/>
</dbReference>
<dbReference type="GO" id="GO:0070181">
    <property type="term" value="F:small ribosomal subunit rRNA binding"/>
    <property type="evidence" value="ECO:0007669"/>
    <property type="project" value="TreeGrafter"/>
</dbReference>
<dbReference type="GO" id="GO:0003735">
    <property type="term" value="F:structural constituent of ribosome"/>
    <property type="evidence" value="ECO:0007669"/>
    <property type="project" value="InterPro"/>
</dbReference>
<dbReference type="GO" id="GO:0006412">
    <property type="term" value="P:translation"/>
    <property type="evidence" value="ECO:0007669"/>
    <property type="project" value="UniProtKB-UniRule"/>
</dbReference>
<dbReference type="Gene3D" id="4.10.640.10">
    <property type="entry name" value="Ribosomal protein S18"/>
    <property type="match status" value="1"/>
</dbReference>
<dbReference type="HAMAP" id="MF_00270">
    <property type="entry name" value="Ribosomal_bS18"/>
    <property type="match status" value="1"/>
</dbReference>
<dbReference type="InterPro" id="IPR001648">
    <property type="entry name" value="Ribosomal_bS18"/>
</dbReference>
<dbReference type="InterPro" id="IPR018275">
    <property type="entry name" value="Ribosomal_bS18_CS"/>
</dbReference>
<dbReference type="InterPro" id="IPR036870">
    <property type="entry name" value="Ribosomal_bS18_sf"/>
</dbReference>
<dbReference type="NCBIfam" id="TIGR00165">
    <property type="entry name" value="S18"/>
    <property type="match status" value="1"/>
</dbReference>
<dbReference type="PANTHER" id="PTHR13479">
    <property type="entry name" value="30S RIBOSOMAL PROTEIN S18"/>
    <property type="match status" value="1"/>
</dbReference>
<dbReference type="PANTHER" id="PTHR13479:SF40">
    <property type="entry name" value="SMALL RIBOSOMAL SUBUNIT PROTEIN BS18M"/>
    <property type="match status" value="1"/>
</dbReference>
<dbReference type="Pfam" id="PF01084">
    <property type="entry name" value="Ribosomal_S18"/>
    <property type="match status" value="1"/>
</dbReference>
<dbReference type="PRINTS" id="PR00974">
    <property type="entry name" value="RIBOSOMALS18"/>
</dbReference>
<dbReference type="SUPFAM" id="SSF46911">
    <property type="entry name" value="Ribosomal protein S18"/>
    <property type="match status" value="1"/>
</dbReference>
<dbReference type="PROSITE" id="PS00057">
    <property type="entry name" value="RIBOSOMAL_S18"/>
    <property type="match status" value="1"/>
</dbReference>
<proteinExistence type="inferred from homology"/>
<comment type="function">
    <text evidence="1">Binds as a heterodimer with protein bS6 to the central domain of the 16S rRNA, where it helps stabilize the platform of the 30S subunit.</text>
</comment>
<comment type="subunit">
    <text evidence="1">Part of the 30S ribosomal subunit. Forms a tight heterodimer with protein bS6.</text>
</comment>
<comment type="similarity">
    <text evidence="1">Belongs to the bacterial ribosomal protein bS18 family.</text>
</comment>